<organismHost>
    <name type="scientific">Staphylococcus aureus</name>
    <dbReference type="NCBI Taxonomy" id="1280"/>
</organismHost>
<protein>
    <recommendedName>
        <fullName evidence="6">Major capsid protein</fullName>
        <shortName evidence="8">CP</shortName>
    </recommendedName>
</protein>
<gene>
    <name evidence="7" type="primary">gp47</name>
</gene>
<keyword id="KW-0002">3D-structure</keyword>
<keyword id="KW-0167">Capsid protein</keyword>
<keyword id="KW-0903">Direct protein sequencing</keyword>
<keyword id="KW-0426">Late protein</keyword>
<keyword id="KW-1185">Reference proteome</keyword>
<keyword id="KW-0946">Virion</keyword>
<sequence length="324" mass="36803">MEQTQKLKLNLQHFASNNVKPQVFNPDNVMMHEKKDGTLMNEFTTPILQEVMENSKIMQLGKYEPMEGTEKKFTFWADKPGAYWVGEGQKIETSKATWVNATMRAFKLGVILPVTKEFLNYTYSQFFEEMKPMIAEAFYKKFDEAGILNQGNNPFGKSIAQSIEKTNKVIKGDFTQDNIIDLEALLEDDELEANAFISKTQNRSLLRKIVDPETKERIYDRNSDSLDGLPVVNLKSSNLKRGELITGDFDKLIYGIPQLIEYKIDETAQLSTVKNEDGTPVNLFEQDMVALRATMHVALHIADDKAFAKLVPADKRTDSVPGEV</sequence>
<evidence type="ECO:0000269" key="1">
    <source>
    </source>
</evidence>
<evidence type="ECO:0000269" key="2">
    <source>
    </source>
</evidence>
<evidence type="ECO:0000269" key="3">
    <source>
    </source>
</evidence>
<evidence type="ECO:0000269" key="4">
    <source>
    </source>
</evidence>
<evidence type="ECO:0000269" key="5">
    <source>
    </source>
</evidence>
<evidence type="ECO:0000303" key="6">
    <source>
    </source>
</evidence>
<evidence type="ECO:0000303" key="7">
    <source>
    </source>
</evidence>
<evidence type="ECO:0000303" key="8">
    <source>
    </source>
</evidence>
<evidence type="ECO:0000305" key="9">
    <source>
    </source>
</evidence>
<evidence type="ECO:0000312" key="10">
    <source>
        <dbReference type="EMBL" id="ABF71618.1"/>
    </source>
</evidence>
<evidence type="ECO:0007744" key="11">
    <source>
        <dbReference type="PDB" id="6B0X"/>
    </source>
</evidence>
<evidence type="ECO:0007744" key="12">
    <source>
        <dbReference type="PDB" id="6B23"/>
    </source>
</evidence>
<evidence type="ECO:0007744" key="13">
    <source>
        <dbReference type="PDB" id="6C21"/>
    </source>
</evidence>
<evidence type="ECO:0007744" key="14">
    <source>
        <dbReference type="PDB" id="6C22"/>
    </source>
</evidence>
<evidence type="ECO:0007829" key="15">
    <source>
        <dbReference type="PDB" id="8VD4"/>
    </source>
</evidence>
<accession>A4ZFB3</accession>
<proteinExistence type="evidence at protein level"/>
<name>CAPSD_BP80A</name>
<reference evidence="10" key="1">
    <citation type="journal article" date="2007" name="J. Bacteriol.">
        <title>Transducing particles of Staphylococcus aureus pathogenicity island SaPI1 are comprised of helper phage-encoded proteins.</title>
        <authorList>
            <person name="Tallent S.M."/>
            <person name="Langston T.B."/>
            <person name="Moran R.G."/>
            <person name="Christie G.E."/>
        </authorList>
    </citation>
    <scope>NUCLEOTIDE SEQUENCE [LARGE SCALE GENOMIC DNA]</scope>
    <scope>PROTEIN SEQUENCE OF 72-90; 108-116; 141-165; 172-199; 222-235; 241-274 AND 293-305</scope>
    <scope>SUBCELLULAR LOCATION</scope>
</reference>
<reference evidence="10" key="2">
    <citation type="journal article" date="2010" name="Virology">
        <title>The complete genomes of Staphylococcus aureus bacteriophages 80 and 80alpha--implications for the specificity of SaPI mobilization.</title>
        <authorList>
            <person name="Christie G.E."/>
            <person name="Matthews A.M."/>
            <person name="King D.G."/>
            <person name="Lane K.D."/>
            <person name="Olivarez N.P."/>
            <person name="Tallent S.M."/>
            <person name="Gill S.R."/>
            <person name="Novick R.P."/>
        </authorList>
    </citation>
    <scope>NUCLEOTIDE SEQUENCE [LARGE SCALE GENOMIC DNA]</scope>
</reference>
<reference key="3">
    <citation type="journal article" date="2008" name="J. Mol. Biol.">
        <title>Capsid size determination by Staphylococcus aureus pathogenicity island SaPI1 involves specific incorporation of SaPI1 proteins into procapsids.</title>
        <authorList>
            <person name="Poliakov A."/>
            <person name="Chang J.R."/>
            <person name="Spilman M.S."/>
            <person name="Damle P.K."/>
            <person name="Christie G.E."/>
            <person name="Mobley J.A."/>
            <person name="Dokland T."/>
        </authorList>
    </citation>
    <scope>SUBCELLULAR LOCATION</scope>
    <scope>MASS SPECTROMETRY</scope>
</reference>
<reference key="4">
    <citation type="journal article" date="2015" name="Mol. Microbiol.">
        <title>Specific N-terminal cleavage of ribosomal protein L27 in Staphylococcus aureus and related bacteria.</title>
        <authorList>
            <person name="Wall E.A."/>
            <person name="Caufield J.H."/>
            <person name="Lyons C.E."/>
            <person name="Manning K.A."/>
            <person name="Dokland T."/>
            <person name="Christie G.E."/>
        </authorList>
    </citation>
    <scope>PROTEOLYTIC CLEAVAGE</scope>
    <scope>MASS SPECTROMETRY</scope>
</reference>
<reference evidence="11 12" key="5">
    <citation type="journal article" date="2017" name="Elife">
        <title>Competing scaffolding proteins determine capsid size during mobilization of Staphylococcus aureus pathogenicity islands.</title>
        <authorList>
            <person name="Dearborn A.D."/>
            <person name="Wall E.A."/>
            <person name="Kizziah J.L."/>
            <person name="Klenow L."/>
            <person name="Parker L.K."/>
            <person name="Manning K.A."/>
            <person name="Spilman M.S."/>
            <person name="Spear J.M."/>
            <person name="Christie G.E."/>
            <person name="Dokland T."/>
        </authorList>
    </citation>
    <scope>STRUCTURE BY ELECTRON MICROSCOPY (3.72 ANGSTROMS) OF 26-309 OF A PROCAPSID</scope>
    <scope>SUBUNIT</scope>
    <scope>SUBCELLULAR LOCATION</scope>
    <scope>MUTAGENESIS OF MET-52</scope>
</reference>
<reference evidence="13 14" key="6">
    <citation type="journal article" date="2017" name="Viruses">
        <title>Cleavage and Structural Transitions during Maturation of Staphylococcus aureus Bacteriophage 80alpha and SaPI1 Capsids.</title>
        <authorList>
            <person name="Kizziah J.L."/>
            <person name="Manning K.A."/>
            <person name="Dearborn A.D."/>
            <person name="Wall E.A."/>
            <person name="Klenow L."/>
            <person name="Hill R.L.L."/>
            <person name="Spilman M.S."/>
            <person name="Stagg S.M."/>
            <person name="Christie G.E."/>
            <person name="Dokland T."/>
        </authorList>
    </citation>
    <scope>STRUCTURE BY ELECTRON MICROSCOPY (5.20 ANGSTROMS) OF THE MATURE CAPSID</scope>
    <scope>SUBCELLULAR LOCATION</scope>
    <scope>MUTAGENESIS OF 2-GLU--PHE-14 AND PHE-14</scope>
</reference>
<organism>
    <name type="scientific">Staphylococcus phage 80alpha</name>
    <dbReference type="NCBI Taxonomy" id="53369"/>
    <lineage>
        <taxon>Viruses</taxon>
        <taxon>Duplodnaviria</taxon>
        <taxon>Heunggongvirae</taxon>
        <taxon>Uroviricota</taxon>
        <taxon>Caudoviricetes</taxon>
        <taxon>Azeredovirinae</taxon>
        <taxon>Dubowvirus</taxon>
    </lineage>
</organism>
<dbReference type="EMBL" id="DQ517338">
    <property type="protein sequence ID" value="ABF71618.1"/>
    <property type="molecule type" value="Genomic_DNA"/>
</dbReference>
<dbReference type="RefSeq" id="YP_001285361.1">
    <property type="nucleotide sequence ID" value="NC_009526.1"/>
</dbReference>
<dbReference type="PDB" id="6B0X">
    <property type="method" value="EM"/>
    <property type="resolution" value="3.72 A"/>
    <property type="chains" value="A/B/C/D/E/F/G=26-309"/>
</dbReference>
<dbReference type="PDB" id="6B23">
    <property type="method" value="EM"/>
    <property type="resolution" value="3.76 A"/>
    <property type="chains" value="A/B/C/D=26-309"/>
</dbReference>
<dbReference type="PDB" id="6C21">
    <property type="method" value="EM"/>
    <property type="resolution" value="5.20 A"/>
    <property type="chains" value="A/B/C/D/E/F/G=1-324"/>
</dbReference>
<dbReference type="PDB" id="6C22">
    <property type="method" value="EM"/>
    <property type="resolution" value="8.00 A"/>
    <property type="chains" value="A/B/C/D=1-324"/>
</dbReference>
<dbReference type="PDB" id="8VD4">
    <property type="method" value="EM"/>
    <property type="resolution" value="3.10 A"/>
    <property type="chains" value="A/B/C/D=1-324"/>
</dbReference>
<dbReference type="PDB" id="8VD5">
    <property type="method" value="EM"/>
    <property type="resolution" value="3.20 A"/>
    <property type="chains" value="A/B/C/D=1-324"/>
</dbReference>
<dbReference type="PDB" id="8VDE">
    <property type="method" value="EM"/>
    <property type="resolution" value="3.40 A"/>
    <property type="chains" value="B1/B2/B3/B4/B5/C1/C2/C3/C4/C5/D1/D2/D3/D4/D5=1-324"/>
</dbReference>
<dbReference type="PDBsum" id="6B0X"/>
<dbReference type="PDBsum" id="6B23"/>
<dbReference type="PDBsum" id="6C21"/>
<dbReference type="PDBsum" id="6C22"/>
<dbReference type="PDBsum" id="8VD4"/>
<dbReference type="PDBsum" id="8VD5"/>
<dbReference type="PDBsum" id="8VDE"/>
<dbReference type="EMDB" id="EMD-43142"/>
<dbReference type="EMDB" id="EMD-43143"/>
<dbReference type="EMDB" id="EMD-43147"/>
<dbReference type="EMDB" id="EMD-7030"/>
<dbReference type="EMDB" id="EMD-7035"/>
<dbReference type="EMDB" id="EMD-7332"/>
<dbReference type="EMDB" id="EMD-7333"/>
<dbReference type="SMR" id="A4ZFB3"/>
<dbReference type="KEGG" id="vg:5246961"/>
<dbReference type="OrthoDB" id="4509at10239"/>
<dbReference type="Proteomes" id="UP000201164">
    <property type="component" value="Segment"/>
</dbReference>
<dbReference type="GO" id="GO:0019028">
    <property type="term" value="C:viral capsid"/>
    <property type="evidence" value="ECO:0007669"/>
    <property type="project" value="UniProtKB-KW"/>
</dbReference>
<dbReference type="InterPro" id="IPR024455">
    <property type="entry name" value="Phage_capsid"/>
</dbReference>
<dbReference type="InterPro" id="IPR054612">
    <property type="entry name" value="Phage_capsid-like_C"/>
</dbReference>
<dbReference type="NCBIfam" id="TIGR01554">
    <property type="entry name" value="major_cap_HK97"/>
    <property type="match status" value="1"/>
</dbReference>
<dbReference type="Pfam" id="PF05065">
    <property type="entry name" value="Phage_capsid"/>
    <property type="match status" value="1"/>
</dbReference>
<dbReference type="SUPFAM" id="SSF56563">
    <property type="entry name" value="Major capsid protein gp5"/>
    <property type="match status" value="1"/>
</dbReference>
<feature type="propeptide" id="PRO_0000459836" evidence="2 3">
    <location>
        <begin position="1"/>
        <end position="14"/>
    </location>
</feature>
<feature type="chain" id="PRO_0000459837" description="Major capsid protein">
    <location>
        <begin position="15"/>
        <end position="324"/>
    </location>
</feature>
<feature type="mutagenesis site" description="Wild-type phage titer and viability." evidence="5">
    <original>EQTQKLKLNLQHF</original>
    <variation>A</variation>
    <location>
        <begin position="2"/>
        <end position="14"/>
    </location>
</feature>
<feature type="mutagenesis site" description="Wild-type phage titer and viability, protein is mostly unprocessed." evidence="5">
    <original>F</original>
    <variation>A</variation>
    <location>
        <position position="14"/>
    </location>
</feature>
<feature type="mutagenesis site" description="Defective in producing infectious virions." evidence="4">
    <original>M</original>
    <variation>Q</variation>
    <location>
        <position position="52"/>
    </location>
</feature>
<feature type="strand" evidence="15">
    <location>
        <begin position="24"/>
        <end position="26"/>
    </location>
</feature>
<feature type="helix" evidence="15">
    <location>
        <begin position="56"/>
        <end position="60"/>
    </location>
</feature>
<feature type="strand" evidence="15">
    <location>
        <begin position="61"/>
        <end position="63"/>
    </location>
</feature>
<feature type="strand" evidence="15">
    <location>
        <begin position="67"/>
        <end position="78"/>
    </location>
</feature>
<feature type="strand" evidence="15">
    <location>
        <begin position="97"/>
        <end position="115"/>
    </location>
</feature>
<feature type="helix" evidence="15">
    <location>
        <begin position="116"/>
        <end position="121"/>
    </location>
</feature>
<feature type="helix" evidence="15">
    <location>
        <begin position="126"/>
        <end position="146"/>
    </location>
</feature>
<feature type="strand" evidence="15">
    <location>
        <begin position="154"/>
        <end position="156"/>
    </location>
</feature>
<feature type="helix" evidence="15">
    <location>
        <begin position="159"/>
        <end position="166"/>
    </location>
</feature>
<feature type="strand" evidence="15">
    <location>
        <begin position="169"/>
        <end position="172"/>
    </location>
</feature>
<feature type="helix" evidence="15">
    <location>
        <begin position="176"/>
        <end position="187"/>
    </location>
</feature>
<feature type="turn" evidence="15">
    <location>
        <begin position="188"/>
        <end position="190"/>
    </location>
</feature>
<feature type="strand" evidence="15">
    <location>
        <begin position="196"/>
        <end position="198"/>
    </location>
</feature>
<feature type="helix" evidence="15">
    <location>
        <begin position="200"/>
        <end position="202"/>
    </location>
</feature>
<feature type="helix" evidence="15">
    <location>
        <begin position="203"/>
        <end position="207"/>
    </location>
</feature>
<feature type="turn" evidence="15">
    <location>
        <begin position="212"/>
        <end position="214"/>
    </location>
</feature>
<feature type="turn" evidence="15">
    <location>
        <begin position="221"/>
        <end position="224"/>
    </location>
</feature>
<feature type="strand" evidence="15">
    <location>
        <begin position="229"/>
        <end position="233"/>
    </location>
</feature>
<feature type="strand" evidence="15">
    <location>
        <begin position="237"/>
        <end position="239"/>
    </location>
</feature>
<feature type="strand" evidence="15">
    <location>
        <begin position="244"/>
        <end position="247"/>
    </location>
</feature>
<feature type="helix" evidence="15">
    <location>
        <begin position="249"/>
        <end position="251"/>
    </location>
</feature>
<feature type="strand" evidence="15">
    <location>
        <begin position="252"/>
        <end position="267"/>
    </location>
</feature>
<feature type="strand" evidence="15">
    <location>
        <begin position="269"/>
        <end position="275"/>
    </location>
</feature>
<feature type="strand" evidence="15">
    <location>
        <begin position="280"/>
        <end position="282"/>
    </location>
</feature>
<feature type="helix" evidence="15">
    <location>
        <begin position="283"/>
        <end position="286"/>
    </location>
</feature>
<feature type="strand" evidence="15">
    <location>
        <begin position="288"/>
        <end position="302"/>
    </location>
</feature>
<feature type="strand" evidence="15">
    <location>
        <begin position="306"/>
        <end position="311"/>
    </location>
</feature>
<comment type="function">
    <text evidence="4">Assembles to form an icosahedral capsid, as well as procapsid, with T=7 icosahedral symmetry (PubMed:28984245).</text>
</comment>
<comment type="subunit">
    <text evidence="4 5">Forms homopentamers and homohexamers in the mature capsid forming a 63 nm icosahedral head with T=7 architecture (PubMed:29258203). The procapsid is made up of hexamers and pentamers of this subunit (PubMed:28984245). There are seven subunits in the asymmetric unit in the T=7 procapsid (PubMed:28984245). Found in the procapsid with the scaffold protein in a 2:1 capsid protein:scaffold protein molecular ratio (PubMed:28984245).</text>
</comment>
<comment type="subcellular location">
    <subcellularLocation>
        <location evidence="1 5">Virion</location>
    </subcellularLocation>
    <text evidence="1 2 4 5">Forms the mature icosahedral capsid shell. Major component of the procapsid (PubMed:17693489, PubMed:18565341, PubMed:28984245, PubMed:29258203).</text>
</comment>
<comment type="PTM">
    <text evidence="3">The N-terminus is cleaved by ribosomal processing protease Prp (PubMed:25388641).</text>
</comment>
<comment type="mass spectrometry" mass="35062.2" error="0.18" method="Electrospray" evidence="2">
    <text>Mature form, residues 15-324.</text>
</comment>
<comment type="mass spectrometry" mass="35042.0" method="MALDI" evidence="3">
    <text>Mature form processed by Prp.</text>
</comment>
<comment type="similarity">
    <text evidence="9">Belongs to the HK97 phage major capsid protein family.</text>
</comment>